<sequence>MNTLNLDIVTPNGSVYNRDNVELVVMQTTAGEIGVMSGHIPTVAALKTGFVKVKFHDGTEYIAVSDGFVEVRKDKVSIIVQTAETAREIDVERAKLAKARAESHLENDDDNTDIHRAERALERANNRLRVAELK</sequence>
<organism>
    <name type="scientific">Staphylococcus aureus (strain N315)</name>
    <dbReference type="NCBI Taxonomy" id="158879"/>
    <lineage>
        <taxon>Bacteria</taxon>
        <taxon>Bacillati</taxon>
        <taxon>Bacillota</taxon>
        <taxon>Bacilli</taxon>
        <taxon>Bacillales</taxon>
        <taxon>Staphylococcaceae</taxon>
        <taxon>Staphylococcus</taxon>
    </lineage>
</organism>
<dbReference type="EMBL" id="BA000018">
    <property type="protein sequence ID" value="BAB43188.1"/>
    <property type="molecule type" value="Genomic_DNA"/>
</dbReference>
<dbReference type="PIR" id="C90003">
    <property type="entry name" value="C90003"/>
</dbReference>
<dbReference type="RefSeq" id="WP_001094394.1">
    <property type="nucleotide sequence ID" value="NC_002745.2"/>
</dbReference>
<dbReference type="SMR" id="P63665"/>
<dbReference type="EnsemblBacteria" id="BAB43188">
    <property type="protein sequence ID" value="BAB43188"/>
    <property type="gene ID" value="BAB43188"/>
</dbReference>
<dbReference type="KEGG" id="sau:SA1904"/>
<dbReference type="HOGENOM" id="CLU_084338_1_3_9"/>
<dbReference type="GO" id="GO:0005886">
    <property type="term" value="C:plasma membrane"/>
    <property type="evidence" value="ECO:0007669"/>
    <property type="project" value="UniProtKB-SubCell"/>
</dbReference>
<dbReference type="GO" id="GO:0045259">
    <property type="term" value="C:proton-transporting ATP synthase complex"/>
    <property type="evidence" value="ECO:0007669"/>
    <property type="project" value="UniProtKB-KW"/>
</dbReference>
<dbReference type="GO" id="GO:0005524">
    <property type="term" value="F:ATP binding"/>
    <property type="evidence" value="ECO:0007669"/>
    <property type="project" value="UniProtKB-UniRule"/>
</dbReference>
<dbReference type="GO" id="GO:0046933">
    <property type="term" value="F:proton-transporting ATP synthase activity, rotational mechanism"/>
    <property type="evidence" value="ECO:0007669"/>
    <property type="project" value="UniProtKB-UniRule"/>
</dbReference>
<dbReference type="CDD" id="cd12152">
    <property type="entry name" value="F1-ATPase_delta"/>
    <property type="match status" value="1"/>
</dbReference>
<dbReference type="FunFam" id="1.20.5.440:FF:000001">
    <property type="entry name" value="ATP synthase epsilon chain"/>
    <property type="match status" value="1"/>
</dbReference>
<dbReference type="FunFam" id="2.60.15.10:FF:000001">
    <property type="entry name" value="ATP synthase epsilon chain"/>
    <property type="match status" value="1"/>
</dbReference>
<dbReference type="Gene3D" id="1.20.5.440">
    <property type="entry name" value="ATP synthase delta/epsilon subunit, C-terminal domain"/>
    <property type="match status" value="1"/>
</dbReference>
<dbReference type="Gene3D" id="2.60.15.10">
    <property type="entry name" value="F0F1 ATP synthase delta/epsilon subunit, N-terminal"/>
    <property type="match status" value="1"/>
</dbReference>
<dbReference type="HAMAP" id="MF_00530">
    <property type="entry name" value="ATP_synth_epsil_bac"/>
    <property type="match status" value="1"/>
</dbReference>
<dbReference type="InterPro" id="IPR036794">
    <property type="entry name" value="ATP_F1_dsu/esu_C_sf"/>
</dbReference>
<dbReference type="InterPro" id="IPR001469">
    <property type="entry name" value="ATP_synth_F1_dsu/esu"/>
</dbReference>
<dbReference type="InterPro" id="IPR020546">
    <property type="entry name" value="ATP_synth_F1_dsu/esu_N"/>
</dbReference>
<dbReference type="InterPro" id="IPR020547">
    <property type="entry name" value="ATP_synth_F1_esu_C"/>
</dbReference>
<dbReference type="InterPro" id="IPR036771">
    <property type="entry name" value="ATPsynth_dsu/esu_N"/>
</dbReference>
<dbReference type="NCBIfam" id="TIGR01216">
    <property type="entry name" value="ATP_synt_epsi"/>
    <property type="match status" value="1"/>
</dbReference>
<dbReference type="NCBIfam" id="NF001846">
    <property type="entry name" value="PRK00571.1-3"/>
    <property type="match status" value="1"/>
</dbReference>
<dbReference type="NCBIfam" id="NF009980">
    <property type="entry name" value="PRK13446.1"/>
    <property type="match status" value="1"/>
</dbReference>
<dbReference type="PANTHER" id="PTHR13822">
    <property type="entry name" value="ATP SYNTHASE DELTA/EPSILON CHAIN"/>
    <property type="match status" value="1"/>
</dbReference>
<dbReference type="PANTHER" id="PTHR13822:SF10">
    <property type="entry name" value="ATP SYNTHASE EPSILON CHAIN, CHLOROPLASTIC"/>
    <property type="match status" value="1"/>
</dbReference>
<dbReference type="Pfam" id="PF00401">
    <property type="entry name" value="ATP-synt_DE"/>
    <property type="match status" value="1"/>
</dbReference>
<dbReference type="Pfam" id="PF02823">
    <property type="entry name" value="ATP-synt_DE_N"/>
    <property type="match status" value="1"/>
</dbReference>
<dbReference type="SUPFAM" id="SSF46604">
    <property type="entry name" value="Epsilon subunit of F1F0-ATP synthase C-terminal domain"/>
    <property type="match status" value="1"/>
</dbReference>
<dbReference type="SUPFAM" id="SSF51344">
    <property type="entry name" value="Epsilon subunit of F1F0-ATP synthase N-terminal domain"/>
    <property type="match status" value="1"/>
</dbReference>
<accession>P63665</accession>
<accession>Q99SF6</accession>
<proteinExistence type="evidence at protein level"/>
<evidence type="ECO:0000255" key="1">
    <source>
        <dbReference type="HAMAP-Rule" id="MF_00530"/>
    </source>
</evidence>
<protein>
    <recommendedName>
        <fullName evidence="1">ATP synthase epsilon chain</fullName>
    </recommendedName>
    <alternativeName>
        <fullName evidence="1">ATP synthase F1 sector epsilon subunit</fullName>
    </alternativeName>
    <alternativeName>
        <fullName evidence="1">F-ATPase epsilon subunit</fullName>
    </alternativeName>
</protein>
<gene>
    <name evidence="1" type="primary">atpC</name>
    <name type="ordered locus">SA1904</name>
</gene>
<reference key="1">
    <citation type="journal article" date="2001" name="Lancet">
        <title>Whole genome sequencing of meticillin-resistant Staphylococcus aureus.</title>
        <authorList>
            <person name="Kuroda M."/>
            <person name="Ohta T."/>
            <person name="Uchiyama I."/>
            <person name="Baba T."/>
            <person name="Yuzawa H."/>
            <person name="Kobayashi I."/>
            <person name="Cui L."/>
            <person name="Oguchi A."/>
            <person name="Aoki K."/>
            <person name="Nagai Y."/>
            <person name="Lian J.-Q."/>
            <person name="Ito T."/>
            <person name="Kanamori M."/>
            <person name="Matsumaru H."/>
            <person name="Maruyama A."/>
            <person name="Murakami H."/>
            <person name="Hosoyama A."/>
            <person name="Mizutani-Ui Y."/>
            <person name="Takahashi N.K."/>
            <person name="Sawano T."/>
            <person name="Inoue R."/>
            <person name="Kaito C."/>
            <person name="Sekimizu K."/>
            <person name="Hirakawa H."/>
            <person name="Kuhara S."/>
            <person name="Goto S."/>
            <person name="Yabuzaki J."/>
            <person name="Kanehisa M."/>
            <person name="Yamashita A."/>
            <person name="Oshima K."/>
            <person name="Furuya K."/>
            <person name="Yoshino C."/>
            <person name="Shiba T."/>
            <person name="Hattori M."/>
            <person name="Ogasawara N."/>
            <person name="Hayashi H."/>
            <person name="Hiramatsu K."/>
        </authorList>
    </citation>
    <scope>NUCLEOTIDE SEQUENCE [LARGE SCALE GENOMIC DNA]</scope>
    <source>
        <strain>N315</strain>
    </source>
</reference>
<reference key="2">
    <citation type="submission" date="2007-10" db="UniProtKB">
        <title>Shotgun proteomic analysis of total and membrane protein extracts of S. aureus strain N315.</title>
        <authorList>
            <person name="Vaezzadeh A.R."/>
            <person name="Deshusses J."/>
            <person name="Lescuyer P."/>
            <person name="Hochstrasser D.F."/>
        </authorList>
    </citation>
    <scope>IDENTIFICATION BY MASS SPECTROMETRY [LARGE SCALE ANALYSIS]</scope>
    <source>
        <strain>N315</strain>
    </source>
</reference>
<keyword id="KW-0066">ATP synthesis</keyword>
<keyword id="KW-1003">Cell membrane</keyword>
<keyword id="KW-0139">CF(1)</keyword>
<keyword id="KW-0375">Hydrogen ion transport</keyword>
<keyword id="KW-0406">Ion transport</keyword>
<keyword id="KW-0472">Membrane</keyword>
<keyword id="KW-0813">Transport</keyword>
<comment type="function">
    <text evidence="1">Produces ATP from ADP in the presence of a proton gradient across the membrane.</text>
</comment>
<comment type="subunit">
    <text>F-type ATPases have 2 components, CF(1) - the catalytic core - and CF(0) - the membrane proton channel. CF(1) has five subunits: alpha(3), beta(3), gamma(1), delta(1), epsilon(1). CF(0) has three main subunits: a, b and c.</text>
</comment>
<comment type="subcellular location">
    <subcellularLocation>
        <location evidence="1">Cell membrane</location>
        <topology evidence="1">Peripheral membrane protein</topology>
    </subcellularLocation>
</comment>
<comment type="similarity">
    <text evidence="1">Belongs to the ATPase epsilon chain family.</text>
</comment>
<name>ATPE_STAAN</name>
<feature type="chain" id="PRO_0000188202" description="ATP synthase epsilon chain">
    <location>
        <begin position="1"/>
        <end position="134"/>
    </location>
</feature>